<dbReference type="EMBL" id="CP000800">
    <property type="protein sequence ID" value="ABV17311.1"/>
    <property type="molecule type" value="Genomic_DNA"/>
</dbReference>
<dbReference type="RefSeq" id="WP_001015023.1">
    <property type="nucleotide sequence ID" value="NC_009801.1"/>
</dbReference>
<dbReference type="SMR" id="A7ZN52"/>
<dbReference type="KEGG" id="ecw:EcE24377A_2161"/>
<dbReference type="HOGENOM" id="CLU_155793_1_1_6"/>
<dbReference type="Proteomes" id="UP000001122">
    <property type="component" value="Chromosome"/>
</dbReference>
<dbReference type="GO" id="GO:0005829">
    <property type="term" value="C:cytosol"/>
    <property type="evidence" value="ECO:0007669"/>
    <property type="project" value="UniProtKB-SubCell"/>
</dbReference>
<dbReference type="GO" id="GO:0044781">
    <property type="term" value="P:bacterial-type flagellum organization"/>
    <property type="evidence" value="ECO:0007669"/>
    <property type="project" value="UniProtKB-KW"/>
</dbReference>
<dbReference type="GO" id="GO:1902209">
    <property type="term" value="P:negative regulation of bacterial-type flagellum assembly"/>
    <property type="evidence" value="ECO:0007669"/>
    <property type="project" value="UniProtKB-UniRule"/>
</dbReference>
<dbReference type="GO" id="GO:0006457">
    <property type="term" value="P:protein folding"/>
    <property type="evidence" value="ECO:0007669"/>
    <property type="project" value="UniProtKB-UniRule"/>
</dbReference>
<dbReference type="FunFam" id="1.20.58.380:FF:000001">
    <property type="entry name" value="Flagellar protein FliT"/>
    <property type="match status" value="1"/>
</dbReference>
<dbReference type="Gene3D" id="1.20.58.380">
    <property type="entry name" value="Flagellar protein flit"/>
    <property type="match status" value="1"/>
</dbReference>
<dbReference type="HAMAP" id="MF_01180">
    <property type="entry name" value="FliT"/>
    <property type="match status" value="1"/>
</dbReference>
<dbReference type="InterPro" id="IPR008622">
    <property type="entry name" value="FliT"/>
</dbReference>
<dbReference type="NCBIfam" id="NF007836">
    <property type="entry name" value="PRK10548.1"/>
    <property type="match status" value="1"/>
</dbReference>
<dbReference type="Pfam" id="PF05400">
    <property type="entry name" value="FliT"/>
    <property type="match status" value="1"/>
</dbReference>
<proteinExistence type="inferred from homology"/>
<evidence type="ECO:0000255" key="1">
    <source>
        <dbReference type="HAMAP-Rule" id="MF_01180"/>
    </source>
</evidence>
<reference key="1">
    <citation type="journal article" date="2008" name="J. Bacteriol.">
        <title>The pangenome structure of Escherichia coli: comparative genomic analysis of E. coli commensal and pathogenic isolates.</title>
        <authorList>
            <person name="Rasko D.A."/>
            <person name="Rosovitz M.J."/>
            <person name="Myers G.S.A."/>
            <person name="Mongodin E.F."/>
            <person name="Fricke W.F."/>
            <person name="Gajer P."/>
            <person name="Crabtree J."/>
            <person name="Sebaihia M."/>
            <person name="Thomson N.R."/>
            <person name="Chaudhuri R."/>
            <person name="Henderson I.R."/>
            <person name="Sperandio V."/>
            <person name="Ravel J."/>
        </authorList>
    </citation>
    <scope>NUCLEOTIDE SEQUENCE [LARGE SCALE GENOMIC DNA]</scope>
    <source>
        <strain>E24377A / ETEC</strain>
    </source>
</reference>
<accession>A7ZN52</accession>
<gene>
    <name evidence="1" type="primary">fliT</name>
    <name type="ordered locus">EcE24377A_2161</name>
</gene>
<protein>
    <recommendedName>
        <fullName evidence="1">Flagellar protein FliT</fullName>
    </recommendedName>
</protein>
<organism>
    <name type="scientific">Escherichia coli O139:H28 (strain E24377A / ETEC)</name>
    <dbReference type="NCBI Taxonomy" id="331111"/>
    <lineage>
        <taxon>Bacteria</taxon>
        <taxon>Pseudomonadati</taxon>
        <taxon>Pseudomonadota</taxon>
        <taxon>Gammaproteobacteria</taxon>
        <taxon>Enterobacterales</taxon>
        <taxon>Enterobacteriaceae</taxon>
        <taxon>Escherichia</taxon>
    </lineage>
</organism>
<sequence length="121" mass="13843">MNHAPHLYFAWQQLVEKSQLMLRLATEEQWDELIASEMAYVNAVQEIAHLTEEIDPSTTMQEQLRPMLRLILDNESKVKQLLQIRMDELAKLVGQSSVQKSVLSAYGDQGGFVLAPQDNLF</sequence>
<keyword id="KW-1005">Bacterial flagellum biogenesis</keyword>
<keyword id="KW-0143">Chaperone</keyword>
<keyword id="KW-0963">Cytoplasm</keyword>
<keyword id="KW-1185">Reference proteome</keyword>
<keyword id="KW-0678">Repressor</keyword>
<keyword id="KW-0804">Transcription</keyword>
<keyword id="KW-0805">Transcription regulation</keyword>
<name>FLIT_ECO24</name>
<feature type="chain" id="PRO_0000353881" description="Flagellar protein FliT">
    <location>
        <begin position="1"/>
        <end position="121"/>
    </location>
</feature>
<feature type="region of interest" description="Required for homodimerization" evidence="1">
    <location>
        <begin position="1"/>
        <end position="50"/>
    </location>
</feature>
<feature type="region of interest" description="FliD binding" evidence="1">
    <location>
        <begin position="60"/>
        <end position="98"/>
    </location>
</feature>
<comment type="function">
    <text evidence="1">Dual-function protein that regulates the transcription of class 2 flagellar operons and that also acts as an export chaperone for the filament-capping protein FliD. As a transcriptional regulator, acts as an anti-FlhDC factor; it directly binds FlhC, thus inhibiting the binding of the FlhC/FlhD complex to class 2 promoters, resulting in decreased expression of class 2 flagellar operons. As a chaperone, effects FliD transition to the membrane by preventing its premature polymerization, and by directing it to the export apparatus.</text>
</comment>
<comment type="subunit">
    <text evidence="1">Homodimer. Interacts with FliD and FlhC.</text>
</comment>
<comment type="subcellular location">
    <subcellularLocation>
        <location evidence="1">Cytoplasm</location>
        <location evidence="1">Cytosol</location>
    </subcellularLocation>
</comment>
<comment type="similarity">
    <text evidence="1">Belongs to the FliT family.</text>
</comment>